<reference key="1">
    <citation type="journal article" date="2002" name="Nature">
        <title>The genome sequence of Schizosaccharomyces pombe.</title>
        <authorList>
            <person name="Wood V."/>
            <person name="Gwilliam R."/>
            <person name="Rajandream M.A."/>
            <person name="Lyne M.H."/>
            <person name="Lyne R."/>
            <person name="Stewart A."/>
            <person name="Sgouros J.G."/>
            <person name="Peat N."/>
            <person name="Hayles J."/>
            <person name="Baker S.G."/>
            <person name="Basham D."/>
            <person name="Bowman S."/>
            <person name="Brooks K."/>
            <person name="Brown D."/>
            <person name="Brown S."/>
            <person name="Chillingworth T."/>
            <person name="Churcher C.M."/>
            <person name="Collins M."/>
            <person name="Connor R."/>
            <person name="Cronin A."/>
            <person name="Davis P."/>
            <person name="Feltwell T."/>
            <person name="Fraser A."/>
            <person name="Gentles S."/>
            <person name="Goble A."/>
            <person name="Hamlin N."/>
            <person name="Harris D.E."/>
            <person name="Hidalgo J."/>
            <person name="Hodgson G."/>
            <person name="Holroyd S."/>
            <person name="Hornsby T."/>
            <person name="Howarth S."/>
            <person name="Huckle E.J."/>
            <person name="Hunt S."/>
            <person name="Jagels K."/>
            <person name="James K.D."/>
            <person name="Jones L."/>
            <person name="Jones M."/>
            <person name="Leather S."/>
            <person name="McDonald S."/>
            <person name="McLean J."/>
            <person name="Mooney P."/>
            <person name="Moule S."/>
            <person name="Mungall K.L."/>
            <person name="Murphy L.D."/>
            <person name="Niblett D."/>
            <person name="Odell C."/>
            <person name="Oliver K."/>
            <person name="O'Neil S."/>
            <person name="Pearson D."/>
            <person name="Quail M.A."/>
            <person name="Rabbinowitsch E."/>
            <person name="Rutherford K.M."/>
            <person name="Rutter S."/>
            <person name="Saunders D."/>
            <person name="Seeger K."/>
            <person name="Sharp S."/>
            <person name="Skelton J."/>
            <person name="Simmonds M.N."/>
            <person name="Squares R."/>
            <person name="Squares S."/>
            <person name="Stevens K."/>
            <person name="Taylor K."/>
            <person name="Taylor R.G."/>
            <person name="Tivey A."/>
            <person name="Walsh S.V."/>
            <person name="Warren T."/>
            <person name="Whitehead S."/>
            <person name="Woodward J.R."/>
            <person name="Volckaert G."/>
            <person name="Aert R."/>
            <person name="Robben J."/>
            <person name="Grymonprez B."/>
            <person name="Weltjens I."/>
            <person name="Vanstreels E."/>
            <person name="Rieger M."/>
            <person name="Schaefer M."/>
            <person name="Mueller-Auer S."/>
            <person name="Gabel C."/>
            <person name="Fuchs M."/>
            <person name="Duesterhoeft A."/>
            <person name="Fritzc C."/>
            <person name="Holzer E."/>
            <person name="Moestl D."/>
            <person name="Hilbert H."/>
            <person name="Borzym K."/>
            <person name="Langer I."/>
            <person name="Beck A."/>
            <person name="Lehrach H."/>
            <person name="Reinhardt R."/>
            <person name="Pohl T.M."/>
            <person name="Eger P."/>
            <person name="Zimmermann W."/>
            <person name="Wedler H."/>
            <person name="Wambutt R."/>
            <person name="Purnelle B."/>
            <person name="Goffeau A."/>
            <person name="Cadieu E."/>
            <person name="Dreano S."/>
            <person name="Gloux S."/>
            <person name="Lelaure V."/>
            <person name="Mottier S."/>
            <person name="Galibert F."/>
            <person name="Aves S.J."/>
            <person name="Xiang Z."/>
            <person name="Hunt C."/>
            <person name="Moore K."/>
            <person name="Hurst S.M."/>
            <person name="Lucas M."/>
            <person name="Rochet M."/>
            <person name="Gaillardin C."/>
            <person name="Tallada V.A."/>
            <person name="Garzon A."/>
            <person name="Thode G."/>
            <person name="Daga R.R."/>
            <person name="Cruzado L."/>
            <person name="Jimenez J."/>
            <person name="Sanchez M."/>
            <person name="del Rey F."/>
            <person name="Benito J."/>
            <person name="Dominguez A."/>
            <person name="Revuelta J.L."/>
            <person name="Moreno S."/>
            <person name="Armstrong J."/>
            <person name="Forsburg S.L."/>
            <person name="Cerutti L."/>
            <person name="Lowe T."/>
            <person name="McCombie W.R."/>
            <person name="Paulsen I."/>
            <person name="Potashkin J."/>
            <person name="Shpakovski G.V."/>
            <person name="Ussery D."/>
            <person name="Barrell B.G."/>
            <person name="Nurse P."/>
        </authorList>
    </citation>
    <scope>NUCLEOTIDE SEQUENCE [LARGE SCALE GENOMIC DNA]</scope>
    <source>
        <strain>972 / ATCC 24843</strain>
    </source>
</reference>
<reference key="2">
    <citation type="journal article" date="2005" name="Curr. Biol.">
        <title>A large-scale screen in S. pombe identifies seven novel genes required for critical meiotic events.</title>
        <authorList>
            <person name="Martin-Castellanos C."/>
            <person name="Blanco M."/>
            <person name="Rozalen A.E."/>
            <person name="Perez-Hidalgo L."/>
            <person name="Garcia A.I."/>
            <person name="Conde F."/>
            <person name="Mata J."/>
            <person name="Ellermeier C."/>
            <person name="Davis L."/>
            <person name="San-Segundo P."/>
            <person name="Smith G.R."/>
            <person name="Moreno S."/>
        </authorList>
    </citation>
    <scope>FUNCTION IN MEIOSIS</scope>
</reference>
<reference key="3">
    <citation type="journal article" date="2005" name="Eukaryot. Cell">
        <title>Systematic deletion analysis of fission yeast protein kinases.</title>
        <authorList>
            <person name="Bimbo A."/>
            <person name="Jia Y."/>
            <person name="Poh S.L."/>
            <person name="Karuturi R.K.M."/>
            <person name="den Elzen N."/>
            <person name="Peng X."/>
            <person name="Zheng L."/>
            <person name="O'Connell M."/>
            <person name="Liu E.T."/>
            <person name="Balasubramanian M.K."/>
            <person name="Liu J."/>
        </authorList>
    </citation>
    <scope>IDENTIFICATION</scope>
</reference>
<reference key="4">
    <citation type="journal article" date="2006" name="Nat. Biotechnol.">
        <title>ORFeome cloning and global analysis of protein localization in the fission yeast Schizosaccharomyces pombe.</title>
        <authorList>
            <person name="Matsuyama A."/>
            <person name="Arai R."/>
            <person name="Yashiroda Y."/>
            <person name="Shirai A."/>
            <person name="Kamata A."/>
            <person name="Sekido S."/>
            <person name="Kobayashi Y."/>
            <person name="Hashimoto A."/>
            <person name="Hamamoto M."/>
            <person name="Hiraoka Y."/>
            <person name="Horinouchi S."/>
            <person name="Yoshida M."/>
        </authorList>
    </citation>
    <scope>SUBCELLULAR LOCATION [LARGE SCALE ANALYSIS]</scope>
</reference>
<reference key="5">
    <citation type="journal article" date="2008" name="J. Proteome Res.">
        <title>Phosphoproteome analysis of fission yeast.</title>
        <authorList>
            <person name="Wilson-Grady J.T."/>
            <person name="Villen J."/>
            <person name="Gygi S.P."/>
        </authorList>
    </citation>
    <scope>PHOSPHORYLATION [LARGE SCALE ANALYSIS] AT TYR-678</scope>
    <scope>IDENTIFICATION BY MASS SPECTROMETRY</scope>
</reference>
<accession>Q09815</accession>
<dbReference type="EC" id="2.7.11.1"/>
<dbReference type="EMBL" id="CU329670">
    <property type="protein sequence ID" value="CAA91195.2"/>
    <property type="molecule type" value="Genomic_DNA"/>
</dbReference>
<dbReference type="PIR" id="S62456">
    <property type="entry name" value="S62456"/>
</dbReference>
<dbReference type="PIR" id="T37780">
    <property type="entry name" value="S62477"/>
</dbReference>
<dbReference type="RefSeq" id="NP_593081.2">
    <property type="nucleotide sequence ID" value="NM_001018478.2"/>
</dbReference>
<dbReference type="SMR" id="Q09815"/>
<dbReference type="BioGRID" id="278792">
    <property type="interactions" value="21"/>
</dbReference>
<dbReference type="ELM" id="Q09815"/>
<dbReference type="FunCoup" id="Q09815">
    <property type="interactions" value="103"/>
</dbReference>
<dbReference type="STRING" id="284812.Q09815"/>
<dbReference type="iPTMnet" id="Q09815"/>
<dbReference type="PaxDb" id="4896-SPAC16C9.07.1"/>
<dbReference type="EnsemblFungi" id="SPAC16C9.07.1">
    <property type="protein sequence ID" value="SPAC16C9.07.1:pep"/>
    <property type="gene ID" value="SPAC16C9.07"/>
</dbReference>
<dbReference type="GeneID" id="2542326"/>
<dbReference type="KEGG" id="spo:2542326"/>
<dbReference type="PomBase" id="SPAC16C9.07"/>
<dbReference type="VEuPathDB" id="FungiDB:SPAC16C9.07"/>
<dbReference type="eggNOG" id="KOG0667">
    <property type="taxonomic scope" value="Eukaryota"/>
</dbReference>
<dbReference type="HOGENOM" id="CLU_339854_0_0_1"/>
<dbReference type="InParanoid" id="Q09815"/>
<dbReference type="PhylomeDB" id="Q09815"/>
<dbReference type="Reactome" id="R-SPO-6804756">
    <property type="pathway name" value="Regulation of TP53 Activity through Phosphorylation"/>
</dbReference>
<dbReference type="PRO" id="PR:Q09815"/>
<dbReference type="Proteomes" id="UP000002485">
    <property type="component" value="Chromosome I"/>
</dbReference>
<dbReference type="GO" id="GO:0032153">
    <property type="term" value="C:cell division site"/>
    <property type="evidence" value="ECO:0007005"/>
    <property type="project" value="PomBase"/>
</dbReference>
<dbReference type="GO" id="GO:0005737">
    <property type="term" value="C:cytoplasm"/>
    <property type="evidence" value="ECO:0007005"/>
    <property type="project" value="PomBase"/>
</dbReference>
<dbReference type="GO" id="GO:0005856">
    <property type="term" value="C:cytoskeleton"/>
    <property type="evidence" value="ECO:0000318"/>
    <property type="project" value="GO_Central"/>
</dbReference>
<dbReference type="GO" id="GO:0005739">
    <property type="term" value="C:mitochondrion"/>
    <property type="evidence" value="ECO:0000314"/>
    <property type="project" value="PomBase"/>
</dbReference>
<dbReference type="GO" id="GO:0110085">
    <property type="term" value="C:mitotic actomyosin contractile ring"/>
    <property type="evidence" value="ECO:0000314"/>
    <property type="project" value="PomBase"/>
</dbReference>
<dbReference type="GO" id="GO:0005524">
    <property type="term" value="F:ATP binding"/>
    <property type="evidence" value="ECO:0000255"/>
    <property type="project" value="PomBase"/>
</dbReference>
<dbReference type="GO" id="GO:0004672">
    <property type="term" value="F:protein kinase activity"/>
    <property type="evidence" value="ECO:0000316"/>
    <property type="project" value="PomBase"/>
</dbReference>
<dbReference type="GO" id="GO:0106310">
    <property type="term" value="F:protein serine kinase activity"/>
    <property type="evidence" value="ECO:0007669"/>
    <property type="project" value="RHEA"/>
</dbReference>
<dbReference type="GO" id="GO:0004674">
    <property type="term" value="F:protein serine/threonine kinase activity"/>
    <property type="evidence" value="ECO:0000318"/>
    <property type="project" value="GO_Central"/>
</dbReference>
<dbReference type="GO" id="GO:0051321">
    <property type="term" value="P:meiotic cell cycle"/>
    <property type="evidence" value="ECO:0007669"/>
    <property type="project" value="UniProtKB-KW"/>
</dbReference>
<dbReference type="GO" id="GO:0051445">
    <property type="term" value="P:regulation of meiotic cell cycle"/>
    <property type="evidence" value="ECO:0000315"/>
    <property type="project" value="PomBase"/>
</dbReference>
<dbReference type="GO" id="GO:0010821">
    <property type="term" value="P:regulation of mitochondrion organization"/>
    <property type="evidence" value="ECO:0000315"/>
    <property type="project" value="PomBase"/>
</dbReference>
<dbReference type="GO" id="GO:1902412">
    <property type="term" value="P:regulation of mitotic cytokinesis"/>
    <property type="evidence" value="ECO:0000315"/>
    <property type="project" value="PomBase"/>
</dbReference>
<dbReference type="GO" id="GO:0023052">
    <property type="term" value="P:signaling"/>
    <property type="evidence" value="ECO:0000303"/>
    <property type="project" value="PomBase"/>
</dbReference>
<dbReference type="CDD" id="cd14210">
    <property type="entry name" value="PKc_DYRK"/>
    <property type="match status" value="1"/>
</dbReference>
<dbReference type="Gene3D" id="3.30.200.20">
    <property type="entry name" value="Phosphorylase Kinase, domain 1"/>
    <property type="match status" value="1"/>
</dbReference>
<dbReference type="Gene3D" id="1.10.510.10">
    <property type="entry name" value="Transferase(Phosphotransferase) domain 1"/>
    <property type="match status" value="1"/>
</dbReference>
<dbReference type="InterPro" id="IPR011009">
    <property type="entry name" value="Kinase-like_dom_sf"/>
</dbReference>
<dbReference type="InterPro" id="IPR000719">
    <property type="entry name" value="Prot_kinase_dom"/>
</dbReference>
<dbReference type="InterPro" id="IPR017441">
    <property type="entry name" value="Protein_kinase_ATP_BS"/>
</dbReference>
<dbReference type="InterPro" id="IPR008271">
    <property type="entry name" value="Ser/Thr_kinase_AS"/>
</dbReference>
<dbReference type="InterPro" id="IPR050494">
    <property type="entry name" value="Ser_Thr_dual-spec_kinase"/>
</dbReference>
<dbReference type="PANTHER" id="PTHR24058">
    <property type="entry name" value="DUAL SPECIFICITY PROTEIN KINASE"/>
    <property type="match status" value="1"/>
</dbReference>
<dbReference type="PANTHER" id="PTHR24058:SF22">
    <property type="entry name" value="DUAL SPECIFICITY TYROSINE-PHOSPHORYLATION-REGULATED KINASE 4"/>
    <property type="match status" value="1"/>
</dbReference>
<dbReference type="Pfam" id="PF00069">
    <property type="entry name" value="Pkinase"/>
    <property type="match status" value="1"/>
</dbReference>
<dbReference type="SMART" id="SM00220">
    <property type="entry name" value="S_TKc"/>
    <property type="match status" value="1"/>
</dbReference>
<dbReference type="SUPFAM" id="SSF56112">
    <property type="entry name" value="Protein kinase-like (PK-like)"/>
    <property type="match status" value="1"/>
</dbReference>
<dbReference type="PROSITE" id="PS00107">
    <property type="entry name" value="PROTEIN_KINASE_ATP"/>
    <property type="match status" value="1"/>
</dbReference>
<dbReference type="PROSITE" id="PS50011">
    <property type="entry name" value="PROTEIN_KINASE_DOM"/>
    <property type="match status" value="1"/>
</dbReference>
<dbReference type="PROSITE" id="PS00108">
    <property type="entry name" value="PROTEIN_KINASE_ST"/>
    <property type="match status" value="1"/>
</dbReference>
<organism>
    <name type="scientific">Schizosaccharomyces pombe (strain 972 / ATCC 24843)</name>
    <name type="common">Fission yeast</name>
    <dbReference type="NCBI Taxonomy" id="284812"/>
    <lineage>
        <taxon>Eukaryota</taxon>
        <taxon>Fungi</taxon>
        <taxon>Dikarya</taxon>
        <taxon>Ascomycota</taxon>
        <taxon>Taphrinomycotina</taxon>
        <taxon>Schizosaccharomycetes</taxon>
        <taxon>Schizosaccharomycetales</taxon>
        <taxon>Schizosaccharomycetaceae</taxon>
        <taxon>Schizosaccharomyces</taxon>
    </lineage>
</organism>
<comment type="function">
    <text evidence="4">Has a role in meiosis.</text>
</comment>
<comment type="catalytic activity">
    <reaction>
        <text>L-seryl-[protein] + ATP = O-phospho-L-seryl-[protein] + ADP + H(+)</text>
        <dbReference type="Rhea" id="RHEA:17989"/>
        <dbReference type="Rhea" id="RHEA-COMP:9863"/>
        <dbReference type="Rhea" id="RHEA-COMP:11604"/>
        <dbReference type="ChEBI" id="CHEBI:15378"/>
        <dbReference type="ChEBI" id="CHEBI:29999"/>
        <dbReference type="ChEBI" id="CHEBI:30616"/>
        <dbReference type="ChEBI" id="CHEBI:83421"/>
        <dbReference type="ChEBI" id="CHEBI:456216"/>
        <dbReference type="EC" id="2.7.11.1"/>
    </reaction>
</comment>
<comment type="catalytic activity">
    <reaction>
        <text>L-threonyl-[protein] + ATP = O-phospho-L-threonyl-[protein] + ADP + H(+)</text>
        <dbReference type="Rhea" id="RHEA:46608"/>
        <dbReference type="Rhea" id="RHEA-COMP:11060"/>
        <dbReference type="Rhea" id="RHEA-COMP:11605"/>
        <dbReference type="ChEBI" id="CHEBI:15378"/>
        <dbReference type="ChEBI" id="CHEBI:30013"/>
        <dbReference type="ChEBI" id="CHEBI:30616"/>
        <dbReference type="ChEBI" id="CHEBI:61977"/>
        <dbReference type="ChEBI" id="CHEBI:456216"/>
        <dbReference type="EC" id="2.7.11.1"/>
    </reaction>
</comment>
<comment type="subcellular location">
    <subcellularLocation>
        <location evidence="5">Cytoplasm</location>
    </subcellularLocation>
    <text>Septum.</text>
</comment>
<comment type="similarity">
    <text evidence="7">Belongs to the protein kinase superfamily. CMGC Ser/Thr protein kinase family. MNB/DYRK subfamily.</text>
</comment>
<sequence length="836" mass="94232">MVGLISTSETLPKQESKSSSAPVSNFLSPNNLTEQTCSPLRAHSTFKEPVFLLSQRQYSHNSKILTELINSVKRPNKPDQNEEKSAVGIEEKSFKDEHLAQKKGLHHFADLKEIFLNKNLSTLDGLQDASLHDNIQSGKLDNPVISQNRRIVLEKLANPNSSKEYETIPTVENRHPLNKLSKTKTLAYEETINQLDETPGGTNYPMNKKKTLSSETNKYEYPQQSKFHECSQFASPRSSIVNGPRTLGKNSKRADDTARMASRMKPSNFNNNIQSSSYGHASQSTKLTSQRDNDHQKDLNFSPYKSIPLNNRPYSPMSEIVGFSGSTTPLDTYGNRPSGKKFNKNSKFRPPGSTISSYSSASTLRRLPRAPGSKVHAERQNSTFNSGISLRALRKEMGNTAPVSSNQLLKDADLVMENLSTRNTEKVLREVNILKRLRESCVAITAKSYDTLDERKIRSLTTFEYLEIKNFQKIYFTGSENCQKLSKQIPLDECNEALFDDDNGDYKAIQGDHLLYRYEIIDTVGKGSFGQVLKCIDHKRGQVVAIKVIKNRQKFHGQTLVEVGILKRLCEADPADKNNVIRYLSHFDFRGHLCIVTELLGSNLFDVIRENNYKGLPLIVVKSFALQGLQALRLLQGQNIIHCDLKPENLLLSHPLKARIKLIDFGSSCFYNEKVYTYLQSRFYRAPEIILGLEYGKEIDIWSFGCILAELFTGVPLFPGGNETEQLGYIMEVLGPPPMALIRNSTRSKAYFDSEGKPHPITDSHNRLLVPSTRTFSQLLNTKQASFLDFLSKCLKWDPKDRITVDSALQHEFILGKTSQKPMVSKGSHPLPDLPV</sequence>
<gene>
    <name type="primary">ppk5</name>
    <name type="synonym">mug189</name>
    <name type="ORF">SPAC16C9.07</name>
    <name type="ORF">SPAC2G11.01</name>
</gene>
<evidence type="ECO:0000255" key="1">
    <source>
        <dbReference type="PROSITE-ProRule" id="PRU00159"/>
    </source>
</evidence>
<evidence type="ECO:0000255" key="2">
    <source>
        <dbReference type="PROSITE-ProRule" id="PRU10027"/>
    </source>
</evidence>
<evidence type="ECO:0000256" key="3">
    <source>
        <dbReference type="SAM" id="MobiDB-lite"/>
    </source>
</evidence>
<evidence type="ECO:0000269" key="4">
    <source>
    </source>
</evidence>
<evidence type="ECO:0000269" key="5">
    <source>
    </source>
</evidence>
<evidence type="ECO:0000269" key="6">
    <source>
    </source>
</evidence>
<evidence type="ECO:0000305" key="7"/>
<name>PPK5_SCHPO</name>
<protein>
    <recommendedName>
        <fullName>Serine/threonine-protein kinase ppk5</fullName>
        <ecNumber>2.7.11.1</ecNumber>
    </recommendedName>
    <alternativeName>
        <fullName>Meiotically up-regulated gene 189 protein</fullName>
    </alternativeName>
</protein>
<proteinExistence type="evidence at protein level"/>
<keyword id="KW-0067">ATP-binding</keyword>
<keyword id="KW-0963">Cytoplasm</keyword>
<keyword id="KW-0418">Kinase</keyword>
<keyword id="KW-0469">Meiosis</keyword>
<keyword id="KW-0547">Nucleotide-binding</keyword>
<keyword id="KW-0597">Phosphoprotein</keyword>
<keyword id="KW-1185">Reference proteome</keyword>
<keyword id="KW-0723">Serine/threonine-protein kinase</keyword>
<keyword id="KW-0808">Transferase</keyword>
<feature type="chain" id="PRO_0000086041" description="Serine/threonine-protein kinase ppk5">
    <location>
        <begin position="1"/>
        <end position="836"/>
    </location>
</feature>
<feature type="domain" description="Protein kinase" evidence="1">
    <location>
        <begin position="518"/>
        <end position="814"/>
    </location>
</feature>
<feature type="region of interest" description="Disordered" evidence="3">
    <location>
        <begin position="1"/>
        <end position="29"/>
    </location>
</feature>
<feature type="region of interest" description="Disordered" evidence="3">
    <location>
        <begin position="192"/>
        <end position="214"/>
    </location>
</feature>
<feature type="region of interest" description="Disordered" evidence="3">
    <location>
        <begin position="230"/>
        <end position="307"/>
    </location>
</feature>
<feature type="region of interest" description="Disordered" evidence="3">
    <location>
        <begin position="328"/>
        <end position="381"/>
    </location>
</feature>
<feature type="compositionally biased region" description="Polar residues" evidence="3">
    <location>
        <begin position="192"/>
        <end position="205"/>
    </location>
</feature>
<feature type="compositionally biased region" description="Polar residues" evidence="3">
    <location>
        <begin position="232"/>
        <end position="241"/>
    </location>
</feature>
<feature type="compositionally biased region" description="Polar residues" evidence="3">
    <location>
        <begin position="265"/>
        <end position="288"/>
    </location>
</feature>
<feature type="compositionally biased region" description="Basic and acidic residues" evidence="3">
    <location>
        <begin position="289"/>
        <end position="298"/>
    </location>
</feature>
<feature type="compositionally biased region" description="Basic residues" evidence="3">
    <location>
        <begin position="338"/>
        <end position="347"/>
    </location>
</feature>
<feature type="compositionally biased region" description="Low complexity" evidence="3">
    <location>
        <begin position="353"/>
        <end position="362"/>
    </location>
</feature>
<feature type="active site" description="Proton acceptor" evidence="1 2">
    <location>
        <position position="644"/>
    </location>
</feature>
<feature type="binding site" evidence="1">
    <location>
        <begin position="524"/>
        <end position="532"/>
    </location>
    <ligand>
        <name>ATP</name>
        <dbReference type="ChEBI" id="CHEBI:30616"/>
    </ligand>
</feature>
<feature type="binding site" evidence="1">
    <location>
        <position position="547"/>
    </location>
    <ligand>
        <name>ATP</name>
        <dbReference type="ChEBI" id="CHEBI:30616"/>
    </ligand>
</feature>
<feature type="modified residue" description="Phosphotyrosine" evidence="6">
    <location>
        <position position="678"/>
    </location>
</feature>